<gene>
    <name type="ordered locus">AF_0689</name>
</gene>
<sequence length="190" mass="22296">MVWLAELPDEILENLYPGEDVLYSVKKKLYTELKPKYLIVTDRRIIYLDQKILGRYDLIDIPYEKLEFVHFKKGKIGAKFIIRNEEGEEIVLTWMEKDEAEKAIEAIRDAINAIAVEPVSIQKRKGILGFELELSKPKEFITRTYPQAVAKAAPKEDPIERIRKLKELYESGVISREEFEEKKRKLLDQI</sequence>
<accession>O29568</accession>
<organism>
    <name type="scientific">Archaeoglobus fulgidus (strain ATCC 49558 / DSM 4304 / JCM 9628 / NBRC 100126 / VC-16)</name>
    <dbReference type="NCBI Taxonomy" id="224325"/>
    <lineage>
        <taxon>Archaea</taxon>
        <taxon>Methanobacteriati</taxon>
        <taxon>Methanobacteriota</taxon>
        <taxon>Archaeoglobi</taxon>
        <taxon>Archaeoglobales</taxon>
        <taxon>Archaeoglobaceae</taxon>
        <taxon>Archaeoglobus</taxon>
    </lineage>
</organism>
<reference key="1">
    <citation type="journal article" date="1997" name="Nature">
        <title>The complete genome sequence of the hyperthermophilic, sulphate-reducing archaeon Archaeoglobus fulgidus.</title>
        <authorList>
            <person name="Klenk H.-P."/>
            <person name="Clayton R.A."/>
            <person name="Tomb J.-F."/>
            <person name="White O."/>
            <person name="Nelson K.E."/>
            <person name="Ketchum K.A."/>
            <person name="Dodson R.J."/>
            <person name="Gwinn M.L."/>
            <person name="Hickey E.K."/>
            <person name="Peterson J.D."/>
            <person name="Richardson D.L."/>
            <person name="Kerlavage A.R."/>
            <person name="Graham D.E."/>
            <person name="Kyrpides N.C."/>
            <person name="Fleischmann R.D."/>
            <person name="Quackenbush J."/>
            <person name="Lee N.H."/>
            <person name="Sutton G.G."/>
            <person name="Gill S.R."/>
            <person name="Kirkness E.F."/>
            <person name="Dougherty B.A."/>
            <person name="McKenney K."/>
            <person name="Adams M.D."/>
            <person name="Loftus B.J."/>
            <person name="Peterson S.N."/>
            <person name="Reich C.I."/>
            <person name="McNeil L.K."/>
            <person name="Badger J.H."/>
            <person name="Glodek A."/>
            <person name="Zhou L."/>
            <person name="Overbeek R."/>
            <person name="Gocayne J.D."/>
            <person name="Weidman J.F."/>
            <person name="McDonald L.A."/>
            <person name="Utterback T.R."/>
            <person name="Cotton M.D."/>
            <person name="Spriggs T."/>
            <person name="Artiach P."/>
            <person name="Kaine B.P."/>
            <person name="Sykes S.M."/>
            <person name="Sadow P.W."/>
            <person name="D'Andrea K.P."/>
            <person name="Bowman C."/>
            <person name="Fujii C."/>
            <person name="Garland S.A."/>
            <person name="Mason T.M."/>
            <person name="Olsen G.J."/>
            <person name="Fraser C.M."/>
            <person name="Smith H.O."/>
            <person name="Woese C.R."/>
            <person name="Venter J.C."/>
        </authorList>
    </citation>
    <scope>NUCLEOTIDE SEQUENCE [LARGE SCALE GENOMIC DNA]</scope>
    <source>
        <strain>ATCC 49558 / DSM 4304 / JCM 9628 / NBRC 100126 / VC-16</strain>
    </source>
</reference>
<dbReference type="EMBL" id="AE000782">
    <property type="protein sequence ID" value="AAB90560.1"/>
    <property type="molecule type" value="Genomic_DNA"/>
</dbReference>
<dbReference type="PIR" id="A69336">
    <property type="entry name" value="A69336"/>
</dbReference>
<dbReference type="RefSeq" id="WP_010878192.1">
    <property type="nucleotide sequence ID" value="NC_000917.1"/>
</dbReference>
<dbReference type="PaxDb" id="224325-AF_0689"/>
<dbReference type="EnsemblBacteria" id="AAB90560">
    <property type="protein sequence ID" value="AAB90560"/>
    <property type="gene ID" value="AF_0689"/>
</dbReference>
<dbReference type="KEGG" id="afu:AF_0689"/>
<dbReference type="eggNOG" id="arCOG06115">
    <property type="taxonomic scope" value="Archaea"/>
</dbReference>
<dbReference type="HOGENOM" id="CLU_1444603_0_0_2"/>
<dbReference type="OrthoDB" id="101685at2157"/>
<dbReference type="Proteomes" id="UP000002199">
    <property type="component" value="Chromosome"/>
</dbReference>
<dbReference type="InterPro" id="IPR018649">
    <property type="entry name" value="SHOCT"/>
</dbReference>
<dbReference type="InterPro" id="IPR039519">
    <property type="entry name" value="YokE-like_PH"/>
</dbReference>
<dbReference type="Pfam" id="PF14470">
    <property type="entry name" value="bPH_3"/>
    <property type="match status" value="1"/>
</dbReference>
<dbReference type="Pfam" id="PF09851">
    <property type="entry name" value="SHOCT"/>
    <property type="match status" value="1"/>
</dbReference>
<name>Y689_ARCFU</name>
<protein>
    <recommendedName>
        <fullName>Uncharacterized protein AF_0689</fullName>
    </recommendedName>
</protein>
<keyword id="KW-1185">Reference proteome</keyword>
<feature type="chain" id="PRO_0000127906" description="Uncharacterized protein AF_0689">
    <location>
        <begin position="1"/>
        <end position="190"/>
    </location>
</feature>
<proteinExistence type="predicted"/>